<evidence type="ECO:0000250" key="1">
    <source>
        <dbReference type="UniProtKB" id="Q6NXJ0"/>
    </source>
</evidence>
<evidence type="ECO:0000255" key="2"/>
<evidence type="ECO:0000255" key="3">
    <source>
        <dbReference type="PROSITE-ProRule" id="PRU00041"/>
    </source>
</evidence>
<evidence type="ECO:0000255" key="4">
    <source>
        <dbReference type="PROSITE-ProRule" id="PRU00224"/>
    </source>
</evidence>
<evidence type="ECO:0000256" key="5">
    <source>
        <dbReference type="SAM" id="MobiDB-lite"/>
    </source>
</evidence>
<evidence type="ECO:0000269" key="6">
    <source>
    </source>
</evidence>
<evidence type="ECO:0000269" key="7">
    <source>
    </source>
</evidence>
<evidence type="ECO:0000269" key="8">
    <source>
    </source>
</evidence>
<evidence type="ECO:0000269" key="9">
    <source>
    </source>
</evidence>
<evidence type="ECO:0000303" key="10">
    <source>
    </source>
</evidence>
<evidence type="ECO:0000303" key="11">
    <source>
    </source>
</evidence>
<evidence type="ECO:0000303" key="12">
    <source>
    </source>
</evidence>
<evidence type="ECO:0000305" key="13"/>
<evidence type="ECO:0000312" key="14">
    <source>
        <dbReference type="HGNC" id="HGNC:24148"/>
    </source>
</evidence>
<evidence type="ECO:0007744" key="15">
    <source>
    </source>
</evidence>
<evidence type="ECO:0007744" key="16">
    <source>
    </source>
</evidence>
<comment type="function">
    <text evidence="9">Regulator of the Hippo signaling pathway, also known as the Salvador-Warts-Hippo (SWH) pathway. Enhances phosphorylation of LATS1 and YAP1 and negatively regulates cell proliferation and organ growth due to a suppression of the transcriptional activity of YAP1, the major effector of the Hippo pathway.</text>
</comment>
<comment type="subunit">
    <text evidence="9">Forms homodimers and heterodimers with WWC1 and WWC3. Interacts with DLC1 and PRKCZ. Interacts (via WW domains) with LATS1 and LATS2.</text>
</comment>
<comment type="interaction">
    <interactant intactId="EBI-1055121">
        <id>Q6AWC2</id>
    </interactant>
    <interactant intactId="EBI-347088">
        <id>P63104</id>
        <label>YWHAZ</label>
    </interactant>
    <organismsDiffer>false</organismsDiffer>
    <experiments>2</experiments>
</comment>
<comment type="subcellular location">
    <subcellularLocation>
        <location evidence="9">Cytoplasm</location>
        <location evidence="9">Cytosol</location>
    </subcellularLocation>
</comment>
<comment type="alternative products">
    <event type="alternative splicing"/>
    <isoform>
        <id>Q6AWC2-1</id>
        <name>1</name>
        <sequence type="displayed"/>
    </isoform>
    <isoform>
        <id>Q6AWC2-2</id>
        <name>2</name>
        <sequence type="described" ref="VSP_029215"/>
    </isoform>
    <isoform>
        <id>Q6AWC2-3</id>
        <name>3</name>
        <sequence type="described" ref="VSP_029214"/>
    </isoform>
    <isoform>
        <id>Q6AWC2-4</id>
        <name>4</name>
        <sequence type="described" ref="VSP_029217"/>
    </isoform>
    <isoform>
        <id>Q6AWC2-5</id>
        <name>5</name>
        <sequence type="described" ref="VSP_029216 VSP_029218"/>
    </isoform>
    <isoform>
        <id>Q6AWC2-6</id>
        <name>6</name>
        <sequence type="described" ref="VSP_029219"/>
    </isoform>
    <isoform>
        <id>Q6AWC2-7</id>
        <name>7</name>
        <sequence type="described" ref="VSP_029213"/>
    </isoform>
</comment>
<comment type="similarity">
    <text evidence="13">Belongs to the WWC family.</text>
</comment>
<comment type="sequence caution" evidence="13">
    <conflict type="erroneous initiation">
        <sequence resource="EMBL-CDS" id="AAH17957"/>
    </conflict>
    <text>Truncated N-terminus.</text>
</comment>
<comment type="sequence caution" evidence="13">
    <conflict type="miscellaneous discrepancy">
        <sequence resource="EMBL-CDS" id="AAI07684"/>
    </conflict>
    <text>Contaminating sequence. Potential poly-A sequence.</text>
</comment>
<comment type="sequence caution" evidence="13">
    <conflict type="erroneous initiation">
        <sequence resource="EMBL-CDS" id="BAB15215"/>
    </conflict>
    <text>Truncated N-terminus.</text>
</comment>
<comment type="sequence caution" evidence="13">
    <conflict type="erroneous initiation">
        <sequence resource="EMBL-CDS" id="BAB85032"/>
    </conflict>
    <text>Truncated N-terminus.</text>
</comment>
<comment type="sequence caution" evidence="13">
    <conflict type="erroneous initiation">
        <sequence resource="EMBL-CDS" id="CAD97477"/>
    </conflict>
    <text>Truncated N-terminus.</text>
</comment>
<proteinExistence type="evidence at protein level"/>
<sequence>MPRRAGSGQLPLPRGWEEARDYDGKVFYIDHNTRRTSWIDPRDRLTKPLSFADCVGDELPWGWEAGFDPQIGVYYIDHINKTTQIEDPRKQWRGEQEKMLKDYLSVAQDALRTQKELYHVKEQRLALALDEYVRLNDAYKEKSSSHTSLFSGSSSSTKYDPDILKAEISTTRLRVKKLKRELSQMKQELLYKEQGFETLQQIDKKMSGGQSGYELSEAKAILTELKSIRKAISSGEKEKQDLMQSLAKLQERFHLDQNIGRSEPDLRCSPVNSHLCLSRQTLDAGSQTSISGDIGVRSRSNLAEKVRLSLQYEEAKRSMANLKIELSKLDSEAWPGALDIEKEKLMLINEKEELLKELQFVTPQKRTQDELERLEAERQRLEEELLSVRGTPSRALAERLRLEERRKELLQKLEETTKLTTYLHSQLKSLSASTLSMSSGSSLGSLASSRGSLNTSSRGSLNSLSSTELYYSSQSDQIDVDYQYKLDFLLQEKSGYIPSGPITTIHENEVVKSPSQPGQSGLCGVAAAATGHTPPLAEAPKSVASLSSRSSLSSLSPPGSPLVLEGTFPMSSSHDASLHQFTADFEDCELSSHFADISLIENQILLDSDSGGASQSLSEDKDLNECAREPLYEGTADVEKSLPKRRVIHLLGEKTTCVSAAVSDESVAGDSGVYEAFVKQPSEMEDVTYSEEDVAIVETAQVQIGLRYNAKSSSFMVIIAQLRNLHAFLIPHTSKVYFRVAVLPSSTDVSCLFRTKVHPPTESILFNDVFRVAISQTALQQKTLRVDLCSVSKHRREECLAGTQISLADLPFSSEVFTLWYNLLPSKQMPCKKNEENEDSVFQPNQPLVDSIDLDAVSALLARTSAELLAVEQELAQEEEEESGQEEPRGPDGDWLTMLREASDEIVAEKEAEVKLPEDSSCTEDLSSCTSVPEMNEDGNRKESNCAKDLRSQPPTRIPTLVDKETNTDEAANDNMAVRPKERSSLSSRQHPFVRSSVIVRSQTFSPGERNQYICRLNRSDSDSSTLAKKSLFVRNSTERRSLRVKRTVCQSVLRRTTQECPVRTSLDLELDLQASLTRQSRLNDELQALRDLRQKLEELKAQGETDLPPGVLEDERFQRLLKQAEKQAEQSKEEQKQGLNAEKLMRQVSKDVCRLREQSQKVPRQVQSFREKIAYFTRAKISIPSLPADDV</sequence>
<name>WWC2_HUMAN</name>
<protein>
    <recommendedName>
        <fullName>Protein WWC2</fullName>
    </recommendedName>
    <alternativeName>
        <fullName>BH-3-only member B</fullName>
    </alternativeName>
    <alternativeName>
        <fullName>WW domain-containing protein 2</fullName>
    </alternativeName>
</protein>
<feature type="chain" id="PRO_0000309490" description="Protein WWC2">
    <location>
        <begin position="1"/>
        <end position="1192"/>
    </location>
</feature>
<feature type="domain" description="WW 1" evidence="4">
    <location>
        <begin position="10"/>
        <end position="43"/>
    </location>
</feature>
<feature type="domain" description="WW 2" evidence="4">
    <location>
        <begin position="57"/>
        <end position="90"/>
    </location>
</feature>
<feature type="domain" description="C2" evidence="3">
    <location>
        <begin position="698"/>
        <end position="821"/>
    </location>
</feature>
<feature type="region of interest" description="Disordered" evidence="5">
    <location>
        <begin position="441"/>
        <end position="462"/>
    </location>
</feature>
<feature type="region of interest" description="Disordered" evidence="5">
    <location>
        <begin position="873"/>
        <end position="895"/>
    </location>
</feature>
<feature type="region of interest" description="Disordered" evidence="5">
    <location>
        <begin position="911"/>
        <end position="991"/>
    </location>
</feature>
<feature type="region of interest" description="Interaction with PRKCZ" evidence="9">
    <location>
        <begin position="1031"/>
        <end position="1050"/>
    </location>
</feature>
<feature type="region of interest" description="Disordered" evidence="5">
    <location>
        <begin position="1124"/>
        <end position="1143"/>
    </location>
</feature>
<feature type="coiled-coil region" evidence="2">
    <location>
        <begin position="121"/>
        <end position="194"/>
    </location>
</feature>
<feature type="coiled-coil region" evidence="2">
    <location>
        <begin position="224"/>
        <end position="256"/>
    </location>
</feature>
<feature type="coiled-coil region" evidence="2">
    <location>
        <begin position="302"/>
        <end position="421"/>
    </location>
</feature>
<feature type="coiled-coil region" evidence="2">
    <location>
        <begin position="859"/>
        <end position="887"/>
    </location>
</feature>
<feature type="coiled-coil region" evidence="2">
    <location>
        <begin position="1068"/>
        <end position="1144"/>
    </location>
</feature>
<feature type="compositionally biased region" description="Acidic residues" evidence="5">
    <location>
        <begin position="875"/>
        <end position="885"/>
    </location>
</feature>
<feature type="compositionally biased region" description="Polar residues" evidence="5">
    <location>
        <begin position="923"/>
        <end position="933"/>
    </location>
</feature>
<feature type="compositionally biased region" description="Basic and acidic residues" evidence="5">
    <location>
        <begin position="938"/>
        <end position="951"/>
    </location>
</feature>
<feature type="compositionally biased region" description="Basic and acidic residues" evidence="5">
    <location>
        <begin position="1124"/>
        <end position="1137"/>
    </location>
</feature>
<feature type="modified residue" description="Phosphoserine" evidence="1">
    <location>
        <position position="286"/>
    </location>
</feature>
<feature type="modified residue" description="Phosphothreonine" evidence="1">
    <location>
        <position position="1004"/>
    </location>
</feature>
<feature type="modified residue" description="Phosphoserine" evidence="15 16">
    <location>
        <position position="1022"/>
    </location>
</feature>
<feature type="splice variant" id="VSP_029213" description="In isoform 7." evidence="11">
    <original>MPRRAGSGQLPLPRGWEEARDYDGKVFYIDHNTRRTSWIDPRDRLTKPLSFADCVGDELPWGWEAGFDPQIGVYYIDHINKTTQIEDPRKQWRGEQEKMLKDYLSVAQDALRTQKELYHVKEQRLALALDEYVRLNDAYKEKSSSHTSLFSGSSSSTKYDPDILKAEISTTRLRVKKLKRELSQMKQELLYKEQGFETLQQIDKKMSGGQSGYELSEAKAILTELKSIRKAISSGEKEKQDLMQSLAKLQERFHLDQNIGRSEPDLRCSPVNSHLCLSRQTLDAGSQTSISGDIGVRSRSNLAEKVRLSLQYEEAKRSMANLKIELSKLDSEAWPGALDIEKEKLMLINEKEELLKELQFVTPQKRTQDELERLEAERQRLEEELLSVRGTPSRALAERLRLEERRKELLQKLEETTKLTTYLHSQLKSLSASTLSMSSGSSLGSLASSRGSLNTSSRGSLNSLSSTELYYSSQSDQIDVDYQYKLDFLLQEKSGYIPSGPITTIHENEVVKSPSQPGQSGLCGVAAAATGHTPPLAEAPKSVASLSSRSSLSSLSPPGSPLVLEGTFPMSSSHDASLHQFTADFEDCELSSHFADISLIENQILLDSDSGGASQSLSEDKDLNECAREPLYEGTADVEKSLPKRRVIHLLGEKTTCVSAAVSDESVAGDSGVYEAFVKQPSEMEDVTYSEEDVAIVETAQVQIGLRYNAKSSSFMVIIAQLRNLHAFLIPHTSKVYFRVAVLPSSTDVSCLFRTKVHPPTESILFNDVFRVAISQTALQQKTLRVDLCSVSKHRREECLAGTQISLADLPFSSEVFTLWYNLLPSKQMPCKKNEENEDSVFQPNQPLVDSIDLDAVSALLARTSAELLAVEQELAQEEEEESGQEEPRGPDGDW</original>
    <variation>MPRLRVHGACLPTKSVLFLFYHR</variation>
    <location>
        <begin position="1"/>
        <end position="895"/>
    </location>
</feature>
<feature type="splice variant" id="VSP_029214" description="In isoform 3." evidence="10">
    <location>
        <begin position="1"/>
        <end position="318"/>
    </location>
</feature>
<feature type="splice variant" id="VSP_029215" description="In isoform 2." evidence="12">
    <location>
        <begin position="1"/>
        <end position="205"/>
    </location>
</feature>
<feature type="splice variant" id="VSP_029216" description="In isoform 5." evidence="10">
    <location>
        <begin position="1"/>
        <end position="98"/>
    </location>
</feature>
<feature type="splice variant" id="VSP_029217" description="In isoform 4." evidence="11">
    <original>CELSSHFADISLIENQILLDSDSGGASQSLSEDKDLNECAREPLYEGTAD</original>
    <variation>Y</variation>
    <location>
        <begin position="588"/>
        <end position="637"/>
    </location>
</feature>
<feature type="splice variant" id="VSP_029218" description="In isoform 5." evidence="10">
    <original>VDLCSVSKHRREECLAGTQISLADLPFSSEVFTLWYNLLPSKQMPCKKNEENEDSVFQPNQPLVDSIDLDAVSALLARTSAELLAVEQELAQEEEEESGQEEPRGPDGDWLTMLREASDEIVAEKEAEVKLPEDSSCTEDLSSCTSVPEMNEDGNRKESNCAKDLRSQPPTRIPTLVDKETNTDEAANDNMAVRPKERSSLSSRQHPFVRSSVIVRSQTFSPGERNQYICRLNRSDSDSSTLAKKSLFVRNSTERRSLRVKRTVCQSVLRRTTQECPVRTSLDLELDLQASLTRQSRLNDELQALRDLRQKLEELKAQGETDLPPGVLEDERFQRLLKQAEKQAEQSKEEQKQGLNAEKLMRQVSKDVCRLREQSQKVPRQVQSFREKIAYFTRAKISIPSLPADDV</original>
    <variation>KNFTFVTAITHGVCLPLPVPMPSFA</variation>
    <location>
        <begin position="786"/>
        <end position="1192"/>
    </location>
</feature>
<feature type="splice variant" id="VSP_029219" description="In isoform 6." evidence="12">
    <original>W</original>
    <variation>WLNTYFLCCWELKDDVFTRLTVKPL</variation>
    <location>
        <position position="895"/>
    </location>
</feature>
<feature type="sequence variant" id="VAR_036965" description="In dbSNP:rs11941467." evidence="7">
    <original>A</original>
    <variation>S</variation>
    <location>
        <position position="773"/>
    </location>
</feature>
<feature type="sequence variant" id="VAR_036966" description="In dbSNP:rs11734376." evidence="7 8">
    <original>V</original>
    <variation>F</variation>
    <location>
        <position position="816"/>
    </location>
</feature>
<feature type="sequence variant" id="VAR_036967" description="In dbSNP:rs3814422." evidence="6 8">
    <original>D</original>
    <variation>H</variation>
    <location>
        <position position="904"/>
    </location>
</feature>
<feature type="sequence variant" id="VAR_062108" description="In dbSNP:rs45470696.">
    <original>R</original>
    <variation>C</variation>
    <location>
        <position position="979"/>
    </location>
</feature>
<feature type="sequence variant" id="VAR_036968" description="In dbSNP:rs4862155." evidence="8">
    <original>A</original>
    <variation>T</variation>
    <location>
        <position position="1189"/>
    </location>
</feature>
<feature type="sequence conflict" description="In Ref. 1; BAC86418." evidence="13" ref="1">
    <original>Q</original>
    <variation>R</variation>
    <location>
        <position position="108"/>
    </location>
</feature>
<feature type="sequence conflict" description="In Ref. 1; BAC86418." evidence="13" ref="1">
    <original>K</original>
    <variation>E</variation>
    <location>
        <position position="177"/>
    </location>
</feature>
<feature type="sequence conflict" description="In Ref. 2; CAH10569." evidence="13" ref="2">
    <original>D</original>
    <variation>Y</variation>
    <location>
        <position position="969"/>
    </location>
</feature>
<keyword id="KW-0025">Alternative splicing</keyword>
<keyword id="KW-0175">Coiled coil</keyword>
<keyword id="KW-0963">Cytoplasm</keyword>
<keyword id="KW-0597">Phosphoprotein</keyword>
<keyword id="KW-1267">Proteomics identification</keyword>
<keyword id="KW-1185">Reference proteome</keyword>
<keyword id="KW-0677">Repeat</keyword>
<keyword id="KW-0678">Repressor</keyword>
<keyword id="KW-0804">Transcription</keyword>
<keyword id="KW-0805">Transcription regulation</keyword>
<gene>
    <name evidence="14" type="primary">WWC2</name>
    <name type="synonym">BOMB</name>
</gene>
<dbReference type="EMBL" id="AK025682">
    <property type="protein sequence ID" value="BAB15215.1"/>
    <property type="status" value="ALT_INIT"/>
    <property type="molecule type" value="mRNA"/>
</dbReference>
<dbReference type="EMBL" id="AK074260">
    <property type="protein sequence ID" value="BAB85032.1"/>
    <property type="status" value="ALT_INIT"/>
    <property type="molecule type" value="mRNA"/>
</dbReference>
<dbReference type="EMBL" id="AK126057">
    <property type="protein sequence ID" value="BAC86418.1"/>
    <property type="molecule type" value="mRNA"/>
</dbReference>
<dbReference type="EMBL" id="AK127061">
    <property type="protein sequence ID" value="BAC86807.1"/>
    <property type="molecule type" value="mRNA"/>
</dbReference>
<dbReference type="EMBL" id="BX647378">
    <property type="protein sequence ID" value="CAH10569.1"/>
    <property type="molecule type" value="mRNA"/>
</dbReference>
<dbReference type="EMBL" id="BX647704">
    <property type="protein sequence ID" value="CAH10570.1"/>
    <property type="molecule type" value="mRNA"/>
</dbReference>
<dbReference type="EMBL" id="AL832424">
    <property type="protein sequence ID" value="CAH10641.1"/>
    <property type="molecule type" value="mRNA"/>
</dbReference>
<dbReference type="EMBL" id="AC093844">
    <property type="status" value="NOT_ANNOTATED_CDS"/>
    <property type="molecule type" value="Genomic_DNA"/>
</dbReference>
<dbReference type="EMBL" id="AC099397">
    <property type="status" value="NOT_ANNOTATED_CDS"/>
    <property type="molecule type" value="Genomic_DNA"/>
</dbReference>
<dbReference type="EMBL" id="AC019193">
    <property type="status" value="NOT_ANNOTATED_CDS"/>
    <property type="molecule type" value="Genomic_DNA"/>
</dbReference>
<dbReference type="EMBL" id="BC017957">
    <property type="protein sequence ID" value="AAH17957.1"/>
    <property type="status" value="ALT_INIT"/>
    <property type="molecule type" value="mRNA"/>
</dbReference>
<dbReference type="EMBL" id="BC053873">
    <property type="protein sequence ID" value="AAH53873.2"/>
    <property type="molecule type" value="mRNA"/>
</dbReference>
<dbReference type="EMBL" id="BC107683">
    <property type="protein sequence ID" value="AAI07684.1"/>
    <property type="status" value="ALT_SEQ"/>
    <property type="molecule type" value="mRNA"/>
</dbReference>
<dbReference type="EMBL" id="AJ566366">
    <property type="protein sequence ID" value="CAD97477.1"/>
    <property type="status" value="ALT_INIT"/>
    <property type="molecule type" value="mRNA"/>
</dbReference>
<dbReference type="CCDS" id="CCDS34109.2">
    <molecule id="Q6AWC2-1"/>
</dbReference>
<dbReference type="CCDS" id="CCDS93674.1">
    <molecule id="Q6AWC2-6"/>
</dbReference>
<dbReference type="RefSeq" id="NP_001397793.1">
    <molecule id="Q6AWC2-6"/>
    <property type="nucleotide sequence ID" value="NM_001410864.1"/>
</dbReference>
<dbReference type="RefSeq" id="NP_079225.5">
    <molecule id="Q6AWC2-1"/>
    <property type="nucleotide sequence ID" value="NM_024949.5"/>
</dbReference>
<dbReference type="RefSeq" id="XP_011530571.1">
    <property type="nucleotide sequence ID" value="XM_011532269.2"/>
</dbReference>
<dbReference type="SMR" id="Q6AWC2"/>
<dbReference type="BioGRID" id="123070">
    <property type="interactions" value="32"/>
</dbReference>
<dbReference type="FunCoup" id="Q6AWC2">
    <property type="interactions" value="1077"/>
</dbReference>
<dbReference type="IntAct" id="Q6AWC2">
    <property type="interactions" value="18"/>
</dbReference>
<dbReference type="MINT" id="Q6AWC2"/>
<dbReference type="STRING" id="9606.ENSP00000384222"/>
<dbReference type="GlyGen" id="Q6AWC2">
    <property type="glycosylation" value="1 site, 1 O-linked glycan (1 site)"/>
</dbReference>
<dbReference type="iPTMnet" id="Q6AWC2"/>
<dbReference type="PhosphoSitePlus" id="Q6AWC2"/>
<dbReference type="BioMuta" id="WWC2"/>
<dbReference type="DMDM" id="160358940"/>
<dbReference type="jPOST" id="Q6AWC2"/>
<dbReference type="MassIVE" id="Q6AWC2"/>
<dbReference type="PaxDb" id="9606-ENSP00000384222"/>
<dbReference type="PeptideAtlas" id="Q6AWC2"/>
<dbReference type="ProteomicsDB" id="66193">
    <molecule id="Q6AWC2-1"/>
</dbReference>
<dbReference type="ProteomicsDB" id="66194">
    <molecule id="Q6AWC2-2"/>
</dbReference>
<dbReference type="ProteomicsDB" id="66195">
    <molecule id="Q6AWC2-3"/>
</dbReference>
<dbReference type="ProteomicsDB" id="66196">
    <molecule id="Q6AWC2-4"/>
</dbReference>
<dbReference type="ProteomicsDB" id="66197">
    <molecule id="Q6AWC2-5"/>
</dbReference>
<dbReference type="ProteomicsDB" id="66198">
    <molecule id="Q6AWC2-6"/>
</dbReference>
<dbReference type="ProteomicsDB" id="66199">
    <molecule id="Q6AWC2-7"/>
</dbReference>
<dbReference type="Pumba" id="Q6AWC2"/>
<dbReference type="Antibodypedia" id="51479">
    <property type="antibodies" value="57 antibodies from 18 providers"/>
</dbReference>
<dbReference type="CPTC" id="Q6AWC2">
    <property type="antibodies" value="3 antibodies"/>
</dbReference>
<dbReference type="DNASU" id="80014"/>
<dbReference type="Ensembl" id="ENST00000403733.8">
    <molecule id="Q6AWC2-1"/>
    <property type="protein sequence ID" value="ENSP00000384222.3"/>
    <property type="gene ID" value="ENSG00000151718.16"/>
</dbReference>
<dbReference type="Ensembl" id="ENST00000438543.5">
    <molecule id="Q6AWC2-5"/>
    <property type="protein sequence ID" value="ENSP00000413521.1"/>
    <property type="gene ID" value="ENSG00000151718.16"/>
</dbReference>
<dbReference type="Ensembl" id="ENST00000448232.6">
    <molecule id="Q6AWC2-6"/>
    <property type="protein sequence ID" value="ENSP00000398577.2"/>
    <property type="gene ID" value="ENSG00000151718.16"/>
</dbReference>
<dbReference type="Ensembl" id="ENST00000504005.5">
    <molecule id="Q6AWC2-3"/>
    <property type="protein sequence ID" value="ENSP00000427569.1"/>
    <property type="gene ID" value="ENSG00000151718.16"/>
</dbReference>
<dbReference type="Ensembl" id="ENST00000508747.1">
    <molecule id="Q6AWC2-7"/>
    <property type="protein sequence ID" value="ENSP00000420835.1"/>
    <property type="gene ID" value="ENSG00000151718.16"/>
</dbReference>
<dbReference type="Ensembl" id="ENST00000513834.5">
    <molecule id="Q6AWC2-4"/>
    <property type="protein sequence ID" value="ENSP00000425054.1"/>
    <property type="gene ID" value="ENSG00000151718.16"/>
</dbReference>
<dbReference type="GeneID" id="80014"/>
<dbReference type="KEGG" id="hsa:80014"/>
<dbReference type="MANE-Select" id="ENST00000403733.8">
    <property type="protein sequence ID" value="ENSP00000384222.3"/>
    <property type="RefSeq nucleotide sequence ID" value="NM_024949.6"/>
    <property type="RefSeq protein sequence ID" value="NP_079225.5"/>
</dbReference>
<dbReference type="UCSC" id="uc003ivo.5">
    <molecule id="Q6AWC2-1"/>
    <property type="organism name" value="human"/>
</dbReference>
<dbReference type="AGR" id="HGNC:24148"/>
<dbReference type="CTD" id="80014"/>
<dbReference type="DisGeNET" id="80014"/>
<dbReference type="GeneCards" id="WWC2"/>
<dbReference type="HGNC" id="HGNC:24148">
    <property type="gene designation" value="WWC2"/>
</dbReference>
<dbReference type="HPA" id="ENSG00000151718">
    <property type="expression patterns" value="Low tissue specificity"/>
</dbReference>
<dbReference type="MalaCards" id="WWC2"/>
<dbReference type="MIM" id="620110">
    <property type="type" value="gene"/>
</dbReference>
<dbReference type="neXtProt" id="NX_Q6AWC2"/>
<dbReference type="OpenTargets" id="ENSG00000151718"/>
<dbReference type="PharmGKB" id="PA143485671"/>
<dbReference type="VEuPathDB" id="HostDB:ENSG00000151718"/>
<dbReference type="eggNOG" id="KOG3209">
    <property type="taxonomic scope" value="Eukaryota"/>
</dbReference>
<dbReference type="GeneTree" id="ENSGT00410000025556"/>
<dbReference type="HOGENOM" id="CLU_005420_0_0_1"/>
<dbReference type="InParanoid" id="Q6AWC2"/>
<dbReference type="OMA" id="FHLDQNM"/>
<dbReference type="OrthoDB" id="2020426at2759"/>
<dbReference type="PAN-GO" id="Q6AWC2">
    <property type="GO annotations" value="7 GO annotations based on evolutionary models"/>
</dbReference>
<dbReference type="PhylomeDB" id="Q6AWC2"/>
<dbReference type="TreeFam" id="TF324040"/>
<dbReference type="PathwayCommons" id="Q6AWC2"/>
<dbReference type="SignaLink" id="Q6AWC2"/>
<dbReference type="BioGRID-ORCS" id="80014">
    <property type="hits" value="12 hits in 1163 CRISPR screens"/>
</dbReference>
<dbReference type="ChiTaRS" id="WWC2">
    <property type="organism name" value="human"/>
</dbReference>
<dbReference type="GenomeRNAi" id="80014"/>
<dbReference type="Pharos" id="Q6AWC2">
    <property type="development level" value="Tbio"/>
</dbReference>
<dbReference type="PRO" id="PR:Q6AWC2"/>
<dbReference type="Proteomes" id="UP000005640">
    <property type="component" value="Chromosome 4"/>
</dbReference>
<dbReference type="RNAct" id="Q6AWC2">
    <property type="molecule type" value="protein"/>
</dbReference>
<dbReference type="Bgee" id="ENSG00000151718">
    <property type="expression patterns" value="Expressed in renal medulla and 194 other cell types or tissues"/>
</dbReference>
<dbReference type="ExpressionAtlas" id="Q6AWC2">
    <property type="expression patterns" value="baseline and differential"/>
</dbReference>
<dbReference type="GO" id="GO:0005737">
    <property type="term" value="C:cytoplasm"/>
    <property type="evidence" value="ECO:0000314"/>
    <property type="project" value="UniProt"/>
</dbReference>
<dbReference type="GO" id="GO:0005829">
    <property type="term" value="C:cytosol"/>
    <property type="evidence" value="ECO:0000314"/>
    <property type="project" value="BHF-UCL"/>
</dbReference>
<dbReference type="GO" id="GO:0019900">
    <property type="term" value="F:kinase binding"/>
    <property type="evidence" value="ECO:0000353"/>
    <property type="project" value="BHF-UCL"/>
</dbReference>
<dbReference type="GO" id="GO:0060090">
    <property type="term" value="F:molecular adaptor activity"/>
    <property type="evidence" value="ECO:0000314"/>
    <property type="project" value="BHF-UCL"/>
</dbReference>
<dbReference type="GO" id="GO:0035591">
    <property type="term" value="F:signaling adaptor activity"/>
    <property type="evidence" value="ECO:0000314"/>
    <property type="project" value="UniProt"/>
</dbReference>
<dbReference type="GO" id="GO:0016477">
    <property type="term" value="P:cell migration"/>
    <property type="evidence" value="ECO:0000318"/>
    <property type="project" value="GO_Central"/>
</dbReference>
<dbReference type="GO" id="GO:0035329">
    <property type="term" value="P:hippo signaling"/>
    <property type="evidence" value="ECO:0000314"/>
    <property type="project" value="UniProt"/>
</dbReference>
<dbReference type="GO" id="GO:0008285">
    <property type="term" value="P:negative regulation of cell population proliferation"/>
    <property type="evidence" value="ECO:0000315"/>
    <property type="project" value="UniProtKB"/>
</dbReference>
<dbReference type="GO" id="GO:0035331">
    <property type="term" value="P:negative regulation of hippo signaling"/>
    <property type="evidence" value="ECO:0000314"/>
    <property type="project" value="BHF-UCL"/>
</dbReference>
<dbReference type="GO" id="GO:0046621">
    <property type="term" value="P:negative regulation of organ growth"/>
    <property type="evidence" value="ECO:0000315"/>
    <property type="project" value="BHF-UCL"/>
</dbReference>
<dbReference type="GO" id="GO:0000122">
    <property type="term" value="P:negative regulation of transcription by RNA polymerase II"/>
    <property type="evidence" value="ECO:0000314"/>
    <property type="project" value="BHF-UCL"/>
</dbReference>
<dbReference type="GO" id="GO:0006355">
    <property type="term" value="P:regulation of DNA-templated transcription"/>
    <property type="evidence" value="ECO:0000318"/>
    <property type="project" value="GO_Central"/>
</dbReference>
<dbReference type="GO" id="GO:0035330">
    <property type="term" value="P:regulation of hippo signaling"/>
    <property type="evidence" value="ECO:0000318"/>
    <property type="project" value="GO_Central"/>
</dbReference>
<dbReference type="CDD" id="cd08680">
    <property type="entry name" value="C2_Kibra"/>
    <property type="match status" value="1"/>
</dbReference>
<dbReference type="CDD" id="cd00201">
    <property type="entry name" value="WW"/>
    <property type="match status" value="2"/>
</dbReference>
<dbReference type="FunFam" id="2.20.70.10:FF:000001">
    <property type="entry name" value="Membrane-associated guanylate kinase, WW and PDZ domain-containing protein 1"/>
    <property type="match status" value="1"/>
</dbReference>
<dbReference type="FunFam" id="2.60.40.150:FF:000084">
    <property type="entry name" value="Protein KIBRA isoform 1"/>
    <property type="match status" value="1"/>
</dbReference>
<dbReference type="FunFam" id="2.20.70.10:FF:000041">
    <property type="entry name" value="WW and C2 domain containing 1"/>
    <property type="match status" value="1"/>
</dbReference>
<dbReference type="Gene3D" id="2.20.70.10">
    <property type="match status" value="2"/>
</dbReference>
<dbReference type="Gene3D" id="2.60.40.150">
    <property type="entry name" value="C2 domain"/>
    <property type="match status" value="1"/>
</dbReference>
<dbReference type="InterPro" id="IPR000008">
    <property type="entry name" value="C2_dom"/>
</dbReference>
<dbReference type="InterPro" id="IPR035892">
    <property type="entry name" value="C2_domain_sf"/>
</dbReference>
<dbReference type="InterPro" id="IPR037771">
    <property type="entry name" value="C2_WWC"/>
</dbReference>
<dbReference type="InterPro" id="IPR001202">
    <property type="entry name" value="WW_dom"/>
</dbReference>
<dbReference type="InterPro" id="IPR036020">
    <property type="entry name" value="WW_dom_sf"/>
</dbReference>
<dbReference type="InterPro" id="IPR051105">
    <property type="entry name" value="WWC/KIBRA_Hippo_Reg"/>
</dbReference>
<dbReference type="PANTHER" id="PTHR14791">
    <property type="entry name" value="BOMB/KIRA PROTEINS"/>
    <property type="match status" value="1"/>
</dbReference>
<dbReference type="PANTHER" id="PTHR14791:SF26">
    <property type="entry name" value="PROTEIN WWC2"/>
    <property type="match status" value="1"/>
</dbReference>
<dbReference type="Pfam" id="PF00397">
    <property type="entry name" value="WW"/>
    <property type="match status" value="2"/>
</dbReference>
<dbReference type="SMART" id="SM00456">
    <property type="entry name" value="WW"/>
    <property type="match status" value="2"/>
</dbReference>
<dbReference type="SUPFAM" id="SSF49562">
    <property type="entry name" value="C2 domain (Calcium/lipid-binding domain, CaLB)"/>
    <property type="match status" value="1"/>
</dbReference>
<dbReference type="SUPFAM" id="SSF51045">
    <property type="entry name" value="WW domain"/>
    <property type="match status" value="2"/>
</dbReference>
<dbReference type="PROSITE" id="PS50004">
    <property type="entry name" value="C2"/>
    <property type="match status" value="1"/>
</dbReference>
<dbReference type="PROSITE" id="PS01159">
    <property type="entry name" value="WW_DOMAIN_1"/>
    <property type="match status" value="1"/>
</dbReference>
<dbReference type="PROSITE" id="PS50020">
    <property type="entry name" value="WW_DOMAIN_2"/>
    <property type="match status" value="2"/>
</dbReference>
<reference key="1">
    <citation type="journal article" date="2004" name="Nat. Genet.">
        <title>Complete sequencing and characterization of 21,243 full-length human cDNAs.</title>
        <authorList>
            <person name="Ota T."/>
            <person name="Suzuki Y."/>
            <person name="Nishikawa T."/>
            <person name="Otsuki T."/>
            <person name="Sugiyama T."/>
            <person name="Irie R."/>
            <person name="Wakamatsu A."/>
            <person name="Hayashi K."/>
            <person name="Sato H."/>
            <person name="Nagai K."/>
            <person name="Kimura K."/>
            <person name="Makita H."/>
            <person name="Sekine M."/>
            <person name="Obayashi M."/>
            <person name="Nishi T."/>
            <person name="Shibahara T."/>
            <person name="Tanaka T."/>
            <person name="Ishii S."/>
            <person name="Yamamoto J."/>
            <person name="Saito K."/>
            <person name="Kawai Y."/>
            <person name="Isono Y."/>
            <person name="Nakamura Y."/>
            <person name="Nagahari K."/>
            <person name="Murakami K."/>
            <person name="Yasuda T."/>
            <person name="Iwayanagi T."/>
            <person name="Wagatsuma M."/>
            <person name="Shiratori A."/>
            <person name="Sudo H."/>
            <person name="Hosoiri T."/>
            <person name="Kaku Y."/>
            <person name="Kodaira H."/>
            <person name="Kondo H."/>
            <person name="Sugawara M."/>
            <person name="Takahashi M."/>
            <person name="Kanda K."/>
            <person name="Yokoi T."/>
            <person name="Furuya T."/>
            <person name="Kikkawa E."/>
            <person name="Omura Y."/>
            <person name="Abe K."/>
            <person name="Kamihara K."/>
            <person name="Katsuta N."/>
            <person name="Sato K."/>
            <person name="Tanikawa M."/>
            <person name="Yamazaki M."/>
            <person name="Ninomiya K."/>
            <person name="Ishibashi T."/>
            <person name="Yamashita H."/>
            <person name="Murakawa K."/>
            <person name="Fujimori K."/>
            <person name="Tanai H."/>
            <person name="Kimata M."/>
            <person name="Watanabe M."/>
            <person name="Hiraoka S."/>
            <person name="Chiba Y."/>
            <person name="Ishida S."/>
            <person name="Ono Y."/>
            <person name="Takiguchi S."/>
            <person name="Watanabe S."/>
            <person name="Yosida M."/>
            <person name="Hotuta T."/>
            <person name="Kusano J."/>
            <person name="Kanehori K."/>
            <person name="Takahashi-Fujii A."/>
            <person name="Hara H."/>
            <person name="Tanase T.-O."/>
            <person name="Nomura Y."/>
            <person name="Togiya S."/>
            <person name="Komai F."/>
            <person name="Hara R."/>
            <person name="Takeuchi K."/>
            <person name="Arita M."/>
            <person name="Imose N."/>
            <person name="Musashino K."/>
            <person name="Yuuki H."/>
            <person name="Oshima A."/>
            <person name="Sasaki N."/>
            <person name="Aotsuka S."/>
            <person name="Yoshikawa Y."/>
            <person name="Matsunawa H."/>
            <person name="Ichihara T."/>
            <person name="Shiohata N."/>
            <person name="Sano S."/>
            <person name="Moriya S."/>
            <person name="Momiyama H."/>
            <person name="Satoh N."/>
            <person name="Takami S."/>
            <person name="Terashima Y."/>
            <person name="Suzuki O."/>
            <person name="Nakagawa S."/>
            <person name="Senoh A."/>
            <person name="Mizoguchi H."/>
            <person name="Goto Y."/>
            <person name="Shimizu F."/>
            <person name="Wakebe H."/>
            <person name="Hishigaki H."/>
            <person name="Watanabe T."/>
            <person name="Sugiyama A."/>
            <person name="Takemoto M."/>
            <person name="Kawakami B."/>
            <person name="Yamazaki M."/>
            <person name="Watanabe K."/>
            <person name="Kumagai A."/>
            <person name="Itakura S."/>
            <person name="Fukuzumi Y."/>
            <person name="Fujimori Y."/>
            <person name="Komiyama M."/>
            <person name="Tashiro H."/>
            <person name="Tanigami A."/>
            <person name="Fujiwara T."/>
            <person name="Ono T."/>
            <person name="Yamada K."/>
            <person name="Fujii Y."/>
            <person name="Ozaki K."/>
            <person name="Hirao M."/>
            <person name="Ohmori Y."/>
            <person name="Kawabata A."/>
            <person name="Hikiji T."/>
            <person name="Kobatake N."/>
            <person name="Inagaki H."/>
            <person name="Ikema Y."/>
            <person name="Okamoto S."/>
            <person name="Okitani R."/>
            <person name="Kawakami T."/>
            <person name="Noguchi S."/>
            <person name="Itoh T."/>
            <person name="Shigeta K."/>
            <person name="Senba T."/>
            <person name="Matsumura K."/>
            <person name="Nakajima Y."/>
            <person name="Mizuno T."/>
            <person name="Morinaga M."/>
            <person name="Sasaki M."/>
            <person name="Togashi T."/>
            <person name="Oyama M."/>
            <person name="Hata H."/>
            <person name="Watanabe M."/>
            <person name="Komatsu T."/>
            <person name="Mizushima-Sugano J."/>
            <person name="Satoh T."/>
            <person name="Shirai Y."/>
            <person name="Takahashi Y."/>
            <person name="Nakagawa K."/>
            <person name="Okumura K."/>
            <person name="Nagase T."/>
            <person name="Nomura N."/>
            <person name="Kikuchi H."/>
            <person name="Masuho Y."/>
            <person name="Yamashita R."/>
            <person name="Nakai K."/>
            <person name="Yada T."/>
            <person name="Nakamura Y."/>
            <person name="Ohara O."/>
            <person name="Isogai T."/>
            <person name="Sugano S."/>
        </authorList>
    </citation>
    <scope>NUCLEOTIDE SEQUENCE [LARGE SCALE MRNA] (ISOFORMS 3 AND 5)</scope>
    <scope>VARIANT HIS-904</scope>
    <source>
        <tissue>Brain</tissue>
    </source>
</reference>
<reference key="2">
    <citation type="journal article" date="2007" name="BMC Genomics">
        <title>The full-ORF clone resource of the German cDNA consortium.</title>
        <authorList>
            <person name="Bechtel S."/>
            <person name="Rosenfelder H."/>
            <person name="Duda A."/>
            <person name="Schmidt C.P."/>
            <person name="Ernst U."/>
            <person name="Wellenreuther R."/>
            <person name="Mehrle A."/>
            <person name="Schuster C."/>
            <person name="Bahr A."/>
            <person name="Bloecker H."/>
            <person name="Heubner D."/>
            <person name="Hoerlein A."/>
            <person name="Michel G."/>
            <person name="Wedler H."/>
            <person name="Koehrer K."/>
            <person name="Ottenwaelder B."/>
            <person name="Poustka A."/>
            <person name="Wiemann S."/>
            <person name="Schupp I."/>
        </authorList>
    </citation>
    <scope>NUCLEOTIDE SEQUENCE [LARGE SCALE MRNA] (ISOFORM 2)</scope>
    <scope>NUCLEOTIDE SEQUENCE [LARGE SCALE MRNA] OF 698-1192 (ISOFORM 6)</scope>
    <scope>VARIANTS PHE-816; HIS-904 AND THR-1189</scope>
    <source>
        <tissue>Fetal kidney</tissue>
        <tissue>Lung endothelial cell</tissue>
        <tissue>Melanoma</tissue>
    </source>
</reference>
<reference key="3">
    <citation type="journal article" date="2005" name="Nature">
        <title>Generation and annotation of the DNA sequences of human chromosomes 2 and 4.</title>
        <authorList>
            <person name="Hillier L.W."/>
            <person name="Graves T.A."/>
            <person name="Fulton R.S."/>
            <person name="Fulton L.A."/>
            <person name="Pepin K.H."/>
            <person name="Minx P."/>
            <person name="Wagner-McPherson C."/>
            <person name="Layman D."/>
            <person name="Wylie K."/>
            <person name="Sekhon M."/>
            <person name="Becker M.C."/>
            <person name="Fewell G.A."/>
            <person name="Delehaunty K.D."/>
            <person name="Miner T.L."/>
            <person name="Nash W.E."/>
            <person name="Kremitzki C."/>
            <person name="Oddy L."/>
            <person name="Du H."/>
            <person name="Sun H."/>
            <person name="Bradshaw-Cordum H."/>
            <person name="Ali J."/>
            <person name="Carter J."/>
            <person name="Cordes M."/>
            <person name="Harris A."/>
            <person name="Isak A."/>
            <person name="van Brunt A."/>
            <person name="Nguyen C."/>
            <person name="Du F."/>
            <person name="Courtney L."/>
            <person name="Kalicki J."/>
            <person name="Ozersky P."/>
            <person name="Abbott S."/>
            <person name="Armstrong J."/>
            <person name="Belter E.A."/>
            <person name="Caruso L."/>
            <person name="Cedroni M."/>
            <person name="Cotton M."/>
            <person name="Davidson T."/>
            <person name="Desai A."/>
            <person name="Elliott G."/>
            <person name="Erb T."/>
            <person name="Fronick C."/>
            <person name="Gaige T."/>
            <person name="Haakenson W."/>
            <person name="Haglund K."/>
            <person name="Holmes A."/>
            <person name="Harkins R."/>
            <person name="Kim K."/>
            <person name="Kruchowski S.S."/>
            <person name="Strong C.M."/>
            <person name="Grewal N."/>
            <person name="Goyea E."/>
            <person name="Hou S."/>
            <person name="Levy A."/>
            <person name="Martinka S."/>
            <person name="Mead K."/>
            <person name="McLellan M.D."/>
            <person name="Meyer R."/>
            <person name="Randall-Maher J."/>
            <person name="Tomlinson C."/>
            <person name="Dauphin-Kohlberg S."/>
            <person name="Kozlowicz-Reilly A."/>
            <person name="Shah N."/>
            <person name="Swearengen-Shahid S."/>
            <person name="Snider J."/>
            <person name="Strong J.T."/>
            <person name="Thompson J."/>
            <person name="Yoakum M."/>
            <person name="Leonard S."/>
            <person name="Pearman C."/>
            <person name="Trani L."/>
            <person name="Radionenko M."/>
            <person name="Waligorski J.E."/>
            <person name="Wang C."/>
            <person name="Rock S.M."/>
            <person name="Tin-Wollam A.-M."/>
            <person name="Maupin R."/>
            <person name="Latreille P."/>
            <person name="Wendl M.C."/>
            <person name="Yang S.-P."/>
            <person name="Pohl C."/>
            <person name="Wallis J.W."/>
            <person name="Spieth J."/>
            <person name="Bieri T.A."/>
            <person name="Berkowicz N."/>
            <person name="Nelson J.O."/>
            <person name="Osborne J."/>
            <person name="Ding L."/>
            <person name="Meyer R."/>
            <person name="Sabo A."/>
            <person name="Shotland Y."/>
            <person name="Sinha P."/>
            <person name="Wohldmann P.E."/>
            <person name="Cook L.L."/>
            <person name="Hickenbotham M.T."/>
            <person name="Eldred J."/>
            <person name="Williams D."/>
            <person name="Jones T.A."/>
            <person name="She X."/>
            <person name="Ciccarelli F.D."/>
            <person name="Izaurralde E."/>
            <person name="Taylor J."/>
            <person name="Schmutz J."/>
            <person name="Myers R.M."/>
            <person name="Cox D.R."/>
            <person name="Huang X."/>
            <person name="McPherson J.D."/>
            <person name="Mardis E.R."/>
            <person name="Clifton S.W."/>
            <person name="Warren W.C."/>
            <person name="Chinwalla A.T."/>
            <person name="Eddy S.R."/>
            <person name="Marra M.A."/>
            <person name="Ovcharenko I."/>
            <person name="Furey T.S."/>
            <person name="Miller W."/>
            <person name="Eichler E.E."/>
            <person name="Bork P."/>
            <person name="Suyama M."/>
            <person name="Torrents D."/>
            <person name="Waterston R.H."/>
            <person name="Wilson R.K."/>
        </authorList>
    </citation>
    <scope>NUCLEOTIDE SEQUENCE [LARGE SCALE GENOMIC DNA]</scope>
</reference>
<reference key="4">
    <citation type="journal article" date="2004" name="Genome Res.">
        <title>The status, quality, and expansion of the NIH full-length cDNA project: the Mammalian Gene Collection (MGC).</title>
        <authorList>
            <consortium name="The MGC Project Team"/>
        </authorList>
    </citation>
    <scope>NUCLEOTIDE SEQUENCE [LARGE SCALE MRNA] (ISOFORM 7)</scope>
    <scope>NUCLEOTIDE SEQUENCE [LARGE SCALE MRNA] OF 408-879 (ISOFORM 1)</scope>
    <scope>NUCLEOTIDE SEQUENCE [LARGE SCALE MRNA] OF 415-1192 (ISOFORM 4)</scope>
    <scope>VARIANTS SER-773 AND PHE-816</scope>
    <source>
        <tissue>Kidney</tissue>
        <tissue>Skin</tissue>
    </source>
</reference>
<reference key="5">
    <citation type="submission" date="2003-06" db="EMBL/GenBank/DDBJ databases">
        <title>Novel pro-apoptotic BH-3-only proteins, apolipoprotein L6 (ApoL6) and BH3-only member B (BOMB), by genomics and functional expression approaches in cancer.</title>
        <authorList>
            <person name="Liu Z."/>
            <person name="Jiang Z."/>
            <person name="Hu C.-A.A."/>
        </authorList>
    </citation>
    <scope>NUCLEOTIDE SEQUENCE [MRNA] OF 713-1192 (ISOFORM 1)</scope>
</reference>
<reference key="6">
    <citation type="journal article" date="2010" name="Sci. Signal.">
        <title>Quantitative phosphoproteomics reveals widespread full phosphorylation site occupancy during mitosis.</title>
        <authorList>
            <person name="Olsen J.V."/>
            <person name="Vermeulen M."/>
            <person name="Santamaria A."/>
            <person name="Kumar C."/>
            <person name="Miller M.L."/>
            <person name="Jensen L.J."/>
            <person name="Gnad F."/>
            <person name="Cox J."/>
            <person name="Jensen T.S."/>
            <person name="Nigg E.A."/>
            <person name="Brunak S."/>
            <person name="Mann M."/>
        </authorList>
    </citation>
    <scope>PHOSPHORYLATION [LARGE SCALE ANALYSIS] AT SER-1022</scope>
    <scope>IDENTIFICATION BY MASS SPECTROMETRY [LARGE SCALE ANALYSIS]</scope>
    <source>
        <tissue>Cervix carcinoma</tissue>
    </source>
</reference>
<reference key="7">
    <citation type="journal article" date="2011" name="Sci. Signal.">
        <title>System-wide temporal characterization of the proteome and phosphoproteome of human embryonic stem cell differentiation.</title>
        <authorList>
            <person name="Rigbolt K.T."/>
            <person name="Prokhorova T.A."/>
            <person name="Akimov V."/>
            <person name="Henningsen J."/>
            <person name="Johansen P.T."/>
            <person name="Kratchmarova I."/>
            <person name="Kassem M."/>
            <person name="Mann M."/>
            <person name="Olsen J.V."/>
            <person name="Blagoev B."/>
        </authorList>
    </citation>
    <scope>PHOSPHORYLATION [LARGE SCALE ANALYSIS] AT SER-1022</scope>
    <scope>IDENTIFICATION BY MASS SPECTROMETRY [LARGE SCALE ANALYSIS]</scope>
</reference>
<reference key="8">
    <citation type="journal article" date="2014" name="Mol. Biol. Evol.">
        <title>Evolutionary and Molecular Facts Link the WWC Protein Family to Hippo Signaling.</title>
        <authorList>
            <person name="Wennmann D.O."/>
            <person name="Schmitz J."/>
            <person name="Wehr M.C."/>
            <person name="Krahn M.P."/>
            <person name="Koschmal N."/>
            <person name="Gromnitza S."/>
            <person name="Schulze U."/>
            <person name="Weide T."/>
            <person name="Chekuri A."/>
            <person name="Skryabin B.V."/>
            <person name="Gerke V."/>
            <person name="Pavenstadt H."/>
            <person name="Duning K."/>
            <person name="Kremerskothen J."/>
        </authorList>
    </citation>
    <scope>FUNCTION</scope>
    <scope>SUBUNIT</scope>
    <scope>SUBCELLULAR LOCATION</scope>
    <scope>INTERACTION WITH DLC1; PRKCZ; LATS1 AND LATS2</scope>
</reference>
<accession>Q6AWC2</accession>
<accession>Q32Q84</accession>
<accession>Q69YQ1</accession>
<accession>Q6AWB8</accession>
<accession>Q6ZSY9</accession>
<accession>Q6ZU09</accession>
<accession>Q7Z620</accession>
<accession>Q8TEB8</accession>
<accession>Q9H6P0</accession>
<organism>
    <name type="scientific">Homo sapiens</name>
    <name type="common">Human</name>
    <dbReference type="NCBI Taxonomy" id="9606"/>
    <lineage>
        <taxon>Eukaryota</taxon>
        <taxon>Metazoa</taxon>
        <taxon>Chordata</taxon>
        <taxon>Craniata</taxon>
        <taxon>Vertebrata</taxon>
        <taxon>Euteleostomi</taxon>
        <taxon>Mammalia</taxon>
        <taxon>Eutheria</taxon>
        <taxon>Euarchontoglires</taxon>
        <taxon>Primates</taxon>
        <taxon>Haplorrhini</taxon>
        <taxon>Catarrhini</taxon>
        <taxon>Hominidae</taxon>
        <taxon>Homo</taxon>
    </lineage>
</organism>